<reference key="1">
    <citation type="journal article" date="2001" name="Science">
        <title>Comparative genomics of Listeria species.</title>
        <authorList>
            <person name="Glaser P."/>
            <person name="Frangeul L."/>
            <person name="Buchrieser C."/>
            <person name="Rusniok C."/>
            <person name="Amend A."/>
            <person name="Baquero F."/>
            <person name="Berche P."/>
            <person name="Bloecker H."/>
            <person name="Brandt P."/>
            <person name="Chakraborty T."/>
            <person name="Charbit A."/>
            <person name="Chetouani F."/>
            <person name="Couve E."/>
            <person name="de Daruvar A."/>
            <person name="Dehoux P."/>
            <person name="Domann E."/>
            <person name="Dominguez-Bernal G."/>
            <person name="Duchaud E."/>
            <person name="Durant L."/>
            <person name="Dussurget O."/>
            <person name="Entian K.-D."/>
            <person name="Fsihi H."/>
            <person name="Garcia-del Portillo F."/>
            <person name="Garrido P."/>
            <person name="Gautier L."/>
            <person name="Goebel W."/>
            <person name="Gomez-Lopez N."/>
            <person name="Hain T."/>
            <person name="Hauf J."/>
            <person name="Jackson D."/>
            <person name="Jones L.-M."/>
            <person name="Kaerst U."/>
            <person name="Kreft J."/>
            <person name="Kuhn M."/>
            <person name="Kunst F."/>
            <person name="Kurapkat G."/>
            <person name="Madueno E."/>
            <person name="Maitournam A."/>
            <person name="Mata Vicente J."/>
            <person name="Ng E."/>
            <person name="Nedjari H."/>
            <person name="Nordsiek G."/>
            <person name="Novella S."/>
            <person name="de Pablos B."/>
            <person name="Perez-Diaz J.-C."/>
            <person name="Purcell R."/>
            <person name="Remmel B."/>
            <person name="Rose M."/>
            <person name="Schlueter T."/>
            <person name="Simoes N."/>
            <person name="Tierrez A."/>
            <person name="Vazquez-Boland J.-A."/>
            <person name="Voss H."/>
            <person name="Wehland J."/>
            <person name="Cossart P."/>
        </authorList>
    </citation>
    <scope>NUCLEOTIDE SEQUENCE [LARGE SCALE GENOMIC DNA]</scope>
    <source>
        <strain>ATCC BAA-679 / EGD-e</strain>
    </source>
</reference>
<comment type="subcellular location">
    <subcellularLocation>
        <location evidence="1">Cytoplasm</location>
    </subcellularLocation>
</comment>
<comment type="similarity">
    <text evidence="1">Belongs to the UPF0291 family.</text>
</comment>
<proteinExistence type="inferred from homology"/>
<evidence type="ECO:0000255" key="1">
    <source>
        <dbReference type="HAMAP-Rule" id="MF_01103"/>
    </source>
</evidence>
<dbReference type="EMBL" id="AL591975">
    <property type="protein sequence ID" value="CAC98575.1"/>
    <property type="molecule type" value="Genomic_DNA"/>
</dbReference>
<dbReference type="PIR" id="AI1136">
    <property type="entry name" value="AI1136"/>
</dbReference>
<dbReference type="RefSeq" id="NP_464024.1">
    <property type="nucleotide sequence ID" value="NC_003210.1"/>
</dbReference>
<dbReference type="RefSeq" id="WP_003721282.1">
    <property type="nucleotide sequence ID" value="NZ_CP149495.1"/>
</dbReference>
<dbReference type="SMR" id="P60073"/>
<dbReference type="STRING" id="169963.gene:17593147"/>
<dbReference type="PaxDb" id="169963-lmo0496"/>
<dbReference type="EnsemblBacteria" id="CAC98575">
    <property type="protein sequence ID" value="CAC98575"/>
    <property type="gene ID" value="CAC98575"/>
</dbReference>
<dbReference type="GeneID" id="984435"/>
<dbReference type="KEGG" id="lmo:lmo0496"/>
<dbReference type="PATRIC" id="fig|169963.11.peg.515"/>
<dbReference type="eggNOG" id="COG4224">
    <property type="taxonomic scope" value="Bacteria"/>
</dbReference>
<dbReference type="HOGENOM" id="CLU_173137_0_2_9"/>
<dbReference type="OrthoDB" id="390105at2"/>
<dbReference type="PhylomeDB" id="P60073"/>
<dbReference type="BioCyc" id="LMON169963:LMO0496-MONOMER"/>
<dbReference type="Proteomes" id="UP000000817">
    <property type="component" value="Chromosome"/>
</dbReference>
<dbReference type="GO" id="GO:0005737">
    <property type="term" value="C:cytoplasm"/>
    <property type="evidence" value="ECO:0007669"/>
    <property type="project" value="UniProtKB-SubCell"/>
</dbReference>
<dbReference type="Gene3D" id="1.10.287.540">
    <property type="entry name" value="Helix hairpin bin"/>
    <property type="match status" value="1"/>
</dbReference>
<dbReference type="HAMAP" id="MF_01103">
    <property type="entry name" value="UPF0291"/>
    <property type="match status" value="1"/>
</dbReference>
<dbReference type="InterPro" id="IPR009242">
    <property type="entry name" value="DUF896"/>
</dbReference>
<dbReference type="PANTHER" id="PTHR37300">
    <property type="entry name" value="UPF0291 PROTEIN CBO2609/CLC_2481"/>
    <property type="match status" value="1"/>
</dbReference>
<dbReference type="PANTHER" id="PTHR37300:SF1">
    <property type="entry name" value="UPF0291 PROTEIN YNZC"/>
    <property type="match status" value="1"/>
</dbReference>
<dbReference type="Pfam" id="PF05979">
    <property type="entry name" value="DUF896"/>
    <property type="match status" value="1"/>
</dbReference>
<dbReference type="SUPFAM" id="SSF158221">
    <property type="entry name" value="YnzC-like"/>
    <property type="match status" value="1"/>
</dbReference>
<accession>P60073</accession>
<accession>Q92EG3</accession>
<keyword id="KW-0963">Cytoplasm</keyword>
<keyword id="KW-1185">Reference proteome</keyword>
<feature type="chain" id="PRO_0000094980" description="UPF0291 protein lmo0496">
    <location>
        <begin position="1"/>
        <end position="74"/>
    </location>
</feature>
<gene>
    <name type="ordered locus">lmo0496</name>
</gene>
<sequence>MKLLLKNINELAAKQKSEGLTAFEKERQAALRQEYLKKIRGTVQDNLHHVTIIDPLGDDVTPKKLKEIQAELRG</sequence>
<protein>
    <recommendedName>
        <fullName evidence="1">UPF0291 protein lmo0496</fullName>
    </recommendedName>
</protein>
<organism>
    <name type="scientific">Listeria monocytogenes serovar 1/2a (strain ATCC BAA-679 / EGD-e)</name>
    <dbReference type="NCBI Taxonomy" id="169963"/>
    <lineage>
        <taxon>Bacteria</taxon>
        <taxon>Bacillati</taxon>
        <taxon>Bacillota</taxon>
        <taxon>Bacilli</taxon>
        <taxon>Bacillales</taxon>
        <taxon>Listeriaceae</taxon>
        <taxon>Listeria</taxon>
    </lineage>
</organism>
<name>Y496_LISMO</name>